<keyword id="KW-0175">Coiled coil</keyword>
<keyword id="KW-0614">Plasmid</keyword>
<keyword id="KW-0964">Secreted</keyword>
<keyword id="KW-0843">Virulence</keyword>
<organism>
    <name type="scientific">Shigella dysenteriae</name>
    <dbReference type="NCBI Taxonomy" id="622"/>
    <lineage>
        <taxon>Bacteria</taxon>
        <taxon>Pseudomonadati</taxon>
        <taxon>Pseudomonadota</taxon>
        <taxon>Gammaproteobacteria</taxon>
        <taxon>Enterobacterales</taxon>
        <taxon>Enterobacteriaceae</taxon>
        <taxon>Shigella</taxon>
    </lineage>
</organism>
<proteinExistence type="inferred from homology"/>
<name>IPAD_SHIDY</name>
<dbReference type="EMBL" id="X60777">
    <property type="protein sequence ID" value="CAA43192.1"/>
    <property type="molecule type" value="Genomic_DNA"/>
</dbReference>
<dbReference type="PIR" id="S15579">
    <property type="entry name" value="S15579"/>
</dbReference>
<dbReference type="SMR" id="Q03947"/>
<dbReference type="GO" id="GO:0005576">
    <property type="term" value="C:extracellular region"/>
    <property type="evidence" value="ECO:0007669"/>
    <property type="project" value="UniProtKB-SubCell"/>
</dbReference>
<dbReference type="Gene3D" id="1.20.1710.10">
    <property type="entry name" value="IpaD-like"/>
    <property type="match status" value="1"/>
</dbReference>
<dbReference type="InterPro" id="IPR036708">
    <property type="entry name" value="BipD-like_sf"/>
</dbReference>
<dbReference type="InterPro" id="IPR009483">
    <property type="entry name" value="IpaD/BipD/SipD"/>
</dbReference>
<dbReference type="NCBIfam" id="TIGR02553">
    <property type="entry name" value="SipD_IpaD_SspD"/>
    <property type="match status" value="1"/>
</dbReference>
<dbReference type="Pfam" id="PF06511">
    <property type="entry name" value="T3SS_TC"/>
    <property type="match status" value="1"/>
</dbReference>
<dbReference type="SUPFAM" id="SSF140693">
    <property type="entry name" value="IpaD-like"/>
    <property type="match status" value="1"/>
</dbReference>
<reference key="1">
    <citation type="journal article" date="1991" name="Mol. Microbiol.">
        <title>Nucleotide sequence of the ipaBCD structural genes of Shigella dysenteriae.</title>
        <authorList>
            <person name="Yao R."/>
            <person name="Palchaudhuri S."/>
        </authorList>
    </citation>
    <scope>NUCLEOTIDE SEQUENCE [GENOMIC DNA]</scope>
    <source>
        <strain>CG097</strain>
    </source>
</reference>
<protein>
    <recommendedName>
        <fullName>Invasin IpaD</fullName>
    </recommendedName>
    <alternativeName>
        <fullName>37 kDa membrane antigen</fullName>
    </alternativeName>
</protein>
<accession>Q03947</accession>
<geneLocation type="plasmid">
    <name>Invasion</name>
</geneLocation>
<gene>
    <name type="primary">ipaD</name>
</gene>
<sequence>MNITTLTNSISTSSFSPNNTNGSSTETVNSDIKTTTSSHPVSSLTMLNDTLHNIRTTNQALKKELSQKTLTKTSLEEIALHSSQISMDVNKSAQLLNILSKTEYPINKDARELLHSAPKEAELDGYEMISHRELWAKIANSINDINEQYLKVYEHAVSSYTQMYQEFSAVLSSLAGWISPGGNDGNSVKLQVKSLKDALTTLKKNYEDKPLYPATNTVSEQEANKWLTELGGTIGTVSAKNGGYVVSINMTPIYNMLNRLDNLGGNGEVVLDNAKYQAWNAGFSAEDETMKNNLQTLVQKYSNANSIFDNLVKVLSSTISSCTDTDKLFLHF</sequence>
<comment type="function">
    <text evidence="1">Required for bacterial invasion of host cells. Controls IpaB and IpaC secretion, and the efficiency with which they are physically inserted into target cell membranes. These proteins are exported via T3SS to form a pore in the host membrane that allows the translocation of the other effectors into the host cytoplasm. Along with IpaB, is essential for both blocking secretion through the Mxi/Spa translocon in the absence of a secretion-inducing signal, and for controlling the level of secretion in the presence of this signal (By similarity).</text>
</comment>
<comment type="subcellular location">
    <subcellularLocation>
        <location evidence="1">Secreted</location>
    </subcellularLocation>
    <text evidence="1">Secreted via the type III secretion system (T3SS). Localizes to the tip of the external secretion needle that is part of the T3SS apparatus (By similarity).</text>
</comment>
<comment type="domain">
    <text evidence="1">The N-terminal domain is an intra-molecular chaperone that prevents premature oligomerization of the residues on the coiled-coil region that are involved in interactions with the needle and/or itself. The residues in the C-terminal domain probably form oligomeric structures at the tip of the needle that are responsible for the regulation of secretion of other effectors (By similarity).</text>
</comment>
<comment type="similarity">
    <text evidence="4">Belongs to the invasin protein D family.</text>
</comment>
<evidence type="ECO:0000250" key="1"/>
<evidence type="ECO:0000255" key="2"/>
<evidence type="ECO:0000256" key="3">
    <source>
        <dbReference type="SAM" id="MobiDB-lite"/>
    </source>
</evidence>
<evidence type="ECO:0000305" key="4"/>
<feature type="chain" id="PRO_0000219861" description="Invasin IpaD">
    <location>
        <begin position="1"/>
        <end position="332"/>
    </location>
</feature>
<feature type="region of interest" description="Disordered" evidence="3">
    <location>
        <begin position="1"/>
        <end position="43"/>
    </location>
</feature>
<feature type="region of interest" description="IpaB binding" evidence="1">
    <location>
        <begin position="192"/>
        <end position="267"/>
    </location>
</feature>
<feature type="coiled-coil region" evidence="2">
    <location>
        <begin position="44"/>
        <end position="77"/>
    </location>
</feature>
<feature type="compositionally biased region" description="Low complexity" evidence="3">
    <location>
        <begin position="1"/>
        <end position="25"/>
    </location>
</feature>
<feature type="compositionally biased region" description="Polar residues" evidence="3">
    <location>
        <begin position="26"/>
        <end position="43"/>
    </location>
</feature>